<keyword id="KW-0963">Cytoplasm</keyword>
<keyword id="KW-0570">Pentose shunt</keyword>
<keyword id="KW-0704">Schiff base</keyword>
<keyword id="KW-0808">Transferase</keyword>
<feature type="chain" id="PRO_1000126328" description="Probable transaldolase">
    <location>
        <begin position="1"/>
        <end position="216"/>
    </location>
</feature>
<feature type="active site" description="Schiff-base intermediate with substrate" evidence="1">
    <location>
        <position position="84"/>
    </location>
</feature>
<accession>B1I057</accession>
<sequence>MKFFIDTANFEEIKEAHAWGILSGVTTNPSLVAKEENVSFHDRLREIAELVDGSVSGEVIALDAEGMIKEGLELAAIAPNITVKLPMTPAGLEACRFFANKGIKTNVTLIFSANQALMAARAGATYVSPFIGRLDDIGQNGVELIETIADMFTIHNIDTQIIAASVRHPQHVTAAALAGAHISTTPFKVLKQLFHHPLTEKGIEGFLADWNKRKGE</sequence>
<organism>
    <name type="scientific">Lysinibacillus sphaericus (strain C3-41)</name>
    <dbReference type="NCBI Taxonomy" id="444177"/>
    <lineage>
        <taxon>Bacteria</taxon>
        <taxon>Bacillati</taxon>
        <taxon>Bacillota</taxon>
        <taxon>Bacilli</taxon>
        <taxon>Bacillales</taxon>
        <taxon>Bacillaceae</taxon>
        <taxon>Lysinibacillus</taxon>
    </lineage>
</organism>
<gene>
    <name evidence="1" type="primary">tal</name>
    <name type="ordered locus">Bsph_0983</name>
</gene>
<comment type="function">
    <text evidence="1">Transaldolase is important for the balance of metabolites in the pentose-phosphate pathway.</text>
</comment>
<comment type="catalytic activity">
    <reaction evidence="1">
        <text>D-sedoheptulose 7-phosphate + D-glyceraldehyde 3-phosphate = D-erythrose 4-phosphate + beta-D-fructose 6-phosphate</text>
        <dbReference type="Rhea" id="RHEA:17053"/>
        <dbReference type="ChEBI" id="CHEBI:16897"/>
        <dbReference type="ChEBI" id="CHEBI:57483"/>
        <dbReference type="ChEBI" id="CHEBI:57634"/>
        <dbReference type="ChEBI" id="CHEBI:59776"/>
        <dbReference type="EC" id="2.2.1.2"/>
    </reaction>
</comment>
<comment type="pathway">
    <text evidence="1">Carbohydrate degradation; pentose phosphate pathway; D-glyceraldehyde 3-phosphate and beta-D-fructose 6-phosphate from D-ribose 5-phosphate and D-xylulose 5-phosphate (non-oxidative stage): step 2/3.</text>
</comment>
<comment type="subcellular location">
    <subcellularLocation>
        <location evidence="1">Cytoplasm</location>
    </subcellularLocation>
</comment>
<comment type="similarity">
    <text evidence="1">Belongs to the transaldolase family. Type 3B subfamily.</text>
</comment>
<proteinExistence type="inferred from homology"/>
<dbReference type="EC" id="2.2.1.2" evidence="1"/>
<dbReference type="EMBL" id="CP000817">
    <property type="protein sequence ID" value="ACA38595.1"/>
    <property type="molecule type" value="Genomic_DNA"/>
</dbReference>
<dbReference type="SMR" id="B1I057"/>
<dbReference type="EnsemblBacteria" id="ACA38595">
    <property type="protein sequence ID" value="ACA38595"/>
    <property type="gene ID" value="Bsph_0983"/>
</dbReference>
<dbReference type="KEGG" id="lsp:Bsph_0983"/>
<dbReference type="HOGENOM" id="CLU_079764_0_0_9"/>
<dbReference type="UniPathway" id="UPA00115">
    <property type="reaction ID" value="UER00414"/>
</dbReference>
<dbReference type="Proteomes" id="UP000002164">
    <property type="component" value="Chromosome"/>
</dbReference>
<dbReference type="GO" id="GO:0005737">
    <property type="term" value="C:cytoplasm"/>
    <property type="evidence" value="ECO:0007669"/>
    <property type="project" value="UniProtKB-SubCell"/>
</dbReference>
<dbReference type="GO" id="GO:0016832">
    <property type="term" value="F:aldehyde-lyase activity"/>
    <property type="evidence" value="ECO:0007669"/>
    <property type="project" value="InterPro"/>
</dbReference>
<dbReference type="GO" id="GO:0004801">
    <property type="term" value="F:transaldolase activity"/>
    <property type="evidence" value="ECO:0007669"/>
    <property type="project" value="UniProtKB-UniRule"/>
</dbReference>
<dbReference type="GO" id="GO:0005975">
    <property type="term" value="P:carbohydrate metabolic process"/>
    <property type="evidence" value="ECO:0007669"/>
    <property type="project" value="InterPro"/>
</dbReference>
<dbReference type="GO" id="GO:0006098">
    <property type="term" value="P:pentose-phosphate shunt"/>
    <property type="evidence" value="ECO:0007669"/>
    <property type="project" value="UniProtKB-UniRule"/>
</dbReference>
<dbReference type="CDD" id="cd00956">
    <property type="entry name" value="Transaldolase_FSA"/>
    <property type="match status" value="1"/>
</dbReference>
<dbReference type="FunFam" id="3.20.20.70:FF:000018">
    <property type="entry name" value="Probable transaldolase"/>
    <property type="match status" value="1"/>
</dbReference>
<dbReference type="Gene3D" id="3.20.20.70">
    <property type="entry name" value="Aldolase class I"/>
    <property type="match status" value="1"/>
</dbReference>
<dbReference type="HAMAP" id="MF_00494">
    <property type="entry name" value="Transaldolase_3b"/>
    <property type="match status" value="1"/>
</dbReference>
<dbReference type="InterPro" id="IPR013785">
    <property type="entry name" value="Aldolase_TIM"/>
</dbReference>
<dbReference type="InterPro" id="IPR001585">
    <property type="entry name" value="TAL/FSA"/>
</dbReference>
<dbReference type="InterPro" id="IPR022999">
    <property type="entry name" value="Transaldolase_3B"/>
</dbReference>
<dbReference type="InterPro" id="IPR004731">
    <property type="entry name" value="Transaldolase_3B/F6P_aldolase"/>
</dbReference>
<dbReference type="InterPro" id="IPR018225">
    <property type="entry name" value="Transaldolase_AS"/>
</dbReference>
<dbReference type="InterPro" id="IPR033919">
    <property type="entry name" value="TSA/FSA_arc/bac"/>
</dbReference>
<dbReference type="NCBIfam" id="TIGR00875">
    <property type="entry name" value="fsa_talC_mipB"/>
    <property type="match status" value="1"/>
</dbReference>
<dbReference type="PANTHER" id="PTHR10683">
    <property type="entry name" value="TRANSALDOLASE"/>
    <property type="match status" value="1"/>
</dbReference>
<dbReference type="PANTHER" id="PTHR10683:SF36">
    <property type="entry name" value="TRANSALDOLASE"/>
    <property type="match status" value="1"/>
</dbReference>
<dbReference type="Pfam" id="PF00923">
    <property type="entry name" value="TAL_FSA"/>
    <property type="match status" value="1"/>
</dbReference>
<dbReference type="SUPFAM" id="SSF51569">
    <property type="entry name" value="Aldolase"/>
    <property type="match status" value="1"/>
</dbReference>
<dbReference type="PROSITE" id="PS01054">
    <property type="entry name" value="TRANSALDOLASE_1"/>
    <property type="match status" value="1"/>
</dbReference>
<dbReference type="PROSITE" id="PS00958">
    <property type="entry name" value="TRANSALDOLASE_2"/>
    <property type="match status" value="1"/>
</dbReference>
<protein>
    <recommendedName>
        <fullName evidence="1">Probable transaldolase</fullName>
        <ecNumber evidence="1">2.2.1.2</ecNumber>
    </recommendedName>
</protein>
<name>TAL_LYSSC</name>
<evidence type="ECO:0000255" key="1">
    <source>
        <dbReference type="HAMAP-Rule" id="MF_00494"/>
    </source>
</evidence>
<reference key="1">
    <citation type="journal article" date="2008" name="J. Bacteriol.">
        <title>Complete genome sequence of the mosquitocidal bacterium Bacillus sphaericus C3-41 and comparison with those of closely related Bacillus species.</title>
        <authorList>
            <person name="Hu X."/>
            <person name="Fan W."/>
            <person name="Han B."/>
            <person name="Liu H."/>
            <person name="Zheng D."/>
            <person name="Li Q."/>
            <person name="Dong W."/>
            <person name="Yan J."/>
            <person name="Gao M."/>
            <person name="Berry C."/>
            <person name="Yuan Z."/>
        </authorList>
    </citation>
    <scope>NUCLEOTIDE SEQUENCE [LARGE SCALE GENOMIC DNA]</scope>
    <source>
        <strain>C3-41</strain>
    </source>
</reference>